<accession>A6ZSH6</accession>
<gene>
    <name type="primary">YPT11</name>
    <name type="ORF">SCY_4887</name>
</gene>
<proteinExistence type="inferred from homology"/>
<dbReference type="EMBL" id="AAFW02000068">
    <property type="protein sequence ID" value="EDN62524.1"/>
    <property type="status" value="ALT_INIT"/>
    <property type="molecule type" value="Genomic_DNA"/>
</dbReference>
<dbReference type="SMR" id="A6ZSH6"/>
<dbReference type="HOGENOM" id="CLU_030444_0_0_1"/>
<dbReference type="OrthoDB" id="7141at4893"/>
<dbReference type="Proteomes" id="UP000007060">
    <property type="component" value="Unassembled WGS sequence"/>
</dbReference>
<dbReference type="GO" id="GO:0005935">
    <property type="term" value="C:cellular bud neck"/>
    <property type="evidence" value="ECO:0007669"/>
    <property type="project" value="UniProtKB-SubCell"/>
</dbReference>
<dbReference type="GO" id="GO:0005934">
    <property type="term" value="C:cellular bud tip"/>
    <property type="evidence" value="ECO:0007669"/>
    <property type="project" value="UniProtKB-SubCell"/>
</dbReference>
<dbReference type="GO" id="GO:0005789">
    <property type="term" value="C:endoplasmic reticulum membrane"/>
    <property type="evidence" value="ECO:0007669"/>
    <property type="project" value="UniProtKB-SubCell"/>
</dbReference>
<dbReference type="GO" id="GO:0005525">
    <property type="term" value="F:GTP binding"/>
    <property type="evidence" value="ECO:0007669"/>
    <property type="project" value="UniProtKB-KW"/>
</dbReference>
<dbReference type="GO" id="GO:0003924">
    <property type="term" value="F:GTPase activity"/>
    <property type="evidence" value="ECO:0007669"/>
    <property type="project" value="InterPro"/>
</dbReference>
<dbReference type="CDD" id="cd00154">
    <property type="entry name" value="Rab"/>
    <property type="match status" value="1"/>
</dbReference>
<dbReference type="FunFam" id="3.40.50.300:FF:002492">
    <property type="entry name" value="GTP-binding protein YPT11"/>
    <property type="match status" value="1"/>
</dbReference>
<dbReference type="Gene3D" id="3.40.50.300">
    <property type="entry name" value="P-loop containing nucleotide triphosphate hydrolases"/>
    <property type="match status" value="1"/>
</dbReference>
<dbReference type="InterPro" id="IPR027417">
    <property type="entry name" value="P-loop_NTPase"/>
</dbReference>
<dbReference type="InterPro" id="IPR050227">
    <property type="entry name" value="Rab"/>
</dbReference>
<dbReference type="InterPro" id="IPR005225">
    <property type="entry name" value="Small_GTP-bd"/>
</dbReference>
<dbReference type="InterPro" id="IPR001806">
    <property type="entry name" value="Small_GTPase"/>
</dbReference>
<dbReference type="NCBIfam" id="TIGR00231">
    <property type="entry name" value="small_GTP"/>
    <property type="match status" value="1"/>
</dbReference>
<dbReference type="PANTHER" id="PTHR47977">
    <property type="entry name" value="RAS-RELATED PROTEIN RAB"/>
    <property type="match status" value="1"/>
</dbReference>
<dbReference type="Pfam" id="PF00071">
    <property type="entry name" value="Ras"/>
    <property type="match status" value="1"/>
</dbReference>
<dbReference type="SMART" id="SM00175">
    <property type="entry name" value="RAB"/>
    <property type="match status" value="1"/>
</dbReference>
<dbReference type="SMART" id="SM00173">
    <property type="entry name" value="RAS"/>
    <property type="match status" value="1"/>
</dbReference>
<dbReference type="SMART" id="SM00174">
    <property type="entry name" value="RHO"/>
    <property type="match status" value="1"/>
</dbReference>
<dbReference type="SUPFAM" id="SSF52540">
    <property type="entry name" value="P-loop containing nucleoside triphosphate hydrolases"/>
    <property type="match status" value="1"/>
</dbReference>
<dbReference type="PROSITE" id="PS51419">
    <property type="entry name" value="RAB"/>
    <property type="match status" value="1"/>
</dbReference>
<keyword id="KW-0256">Endoplasmic reticulum</keyword>
<keyword id="KW-0342">GTP-binding</keyword>
<keyword id="KW-0449">Lipoprotein</keyword>
<keyword id="KW-0472">Membrane</keyword>
<keyword id="KW-0547">Nucleotide-binding</keyword>
<keyword id="KW-0636">Prenylation</keyword>
<organism>
    <name type="scientific">Saccharomyces cerevisiae (strain YJM789)</name>
    <name type="common">Baker's yeast</name>
    <dbReference type="NCBI Taxonomy" id="307796"/>
    <lineage>
        <taxon>Eukaryota</taxon>
        <taxon>Fungi</taxon>
        <taxon>Dikarya</taxon>
        <taxon>Ascomycota</taxon>
        <taxon>Saccharomycotina</taxon>
        <taxon>Saccharomycetes</taxon>
        <taxon>Saccharomycetales</taxon>
        <taxon>Saccharomycetaceae</taxon>
        <taxon>Saccharomyces</taxon>
    </lineage>
</organism>
<reference key="1">
    <citation type="journal article" date="2007" name="Proc. Natl. Acad. Sci. U.S.A.">
        <title>Genome sequencing and comparative analysis of Saccharomyces cerevisiae strain YJM789.</title>
        <authorList>
            <person name="Wei W."/>
            <person name="McCusker J.H."/>
            <person name="Hyman R.W."/>
            <person name="Jones T."/>
            <person name="Ning Y."/>
            <person name="Cao Z."/>
            <person name="Gu Z."/>
            <person name="Bruno D."/>
            <person name="Miranda M."/>
            <person name="Nguyen M."/>
            <person name="Wilhelmy J."/>
            <person name="Komp C."/>
            <person name="Tamse R."/>
            <person name="Wang X."/>
            <person name="Jia P."/>
            <person name="Luedi P."/>
            <person name="Oefner P.J."/>
            <person name="David L."/>
            <person name="Dietrich F.S."/>
            <person name="Li Y."/>
            <person name="Davis R.W."/>
            <person name="Steinmetz L.M."/>
        </authorList>
    </citation>
    <scope>NUCLEOTIDE SEQUENCE [LARGE SCALE GENOMIC DNA]</scope>
    <source>
        <strain>YJM789</strain>
    </source>
</reference>
<comment type="function">
    <text evidence="1">Involved in the positive control of both endoplasmic reticulum (ER) and mitochondrion inheritance during cell divison. Required for the MYO2-dependent retention of newly inherited mitochondria at the bud tip in developing daughter cells (By similarity).</text>
</comment>
<comment type="subunit">
    <text evidence="1">Interacts with MYO2 (via C-terminal tail domain). Interacts with YIF1, YIP3, YIP4 and YIP5 (By similarity).</text>
</comment>
<comment type="subcellular location">
    <subcellularLocation>
        <location evidence="1">Endoplasmic reticulum membrane</location>
        <topology evidence="1">Lipid-anchor</topology>
        <orientation evidence="1">Cytoplasmic side</orientation>
    </subcellularLocation>
    <subcellularLocation>
        <location evidence="1">Bud tip</location>
    </subcellularLocation>
    <subcellularLocation>
        <location evidence="1">Bud neck</location>
    </subcellularLocation>
    <text evidence="1">Enriched in the peripheral ER of small buds and daughter cells. Concentrates at the site of bud emergence, at the bud tip of the growing bud, and at the bud neck during the M phase. Interaction with MYO2 is required for proper localization to the bud (By similarity).</text>
</comment>
<comment type="similarity">
    <text evidence="4">Belongs to the small GTPase superfamily. Rab family.</text>
</comment>
<comment type="sequence caution" evidence="4">
    <conflict type="erroneous initiation">
        <sequence resource="EMBL-CDS" id="EDN62524"/>
    </conflict>
</comment>
<sequence>MSQRKRYSLNVVTSPSIPSPTPSAPIRTNESNWEAASPASAASSFLPNVHHGGTVLNPGLGIMRSPSLNKSGAFGRSGSSGSSTVIEPSNIKLLLIGDANVGKTAMILSYCRELLTRAEMSRSVRLRHQQQQQHKDLGLKKTVVNHRLSMKEKRKRYSSNDFEKEFKDINHFADETSDFGNPNIGDDNNHEMADPNEIVIETRSTIGIDIKTNLVNIDNRFFNVILWDTAGQERYQNAIIPSLYKKTNAVILTYDITNAKSFQSCMERWIVQALENFSSQDLLKARFFLVGNKIDLYKERQVTHYDVVQMVQEMQLKHGIKISGNFEVSCKWVNVVERTMNMIILDLVENGCFENNDPCVSITTSDDVQGHEQEFHDTVEEPFNFTRQRQHQLEKNNTVDITKPNDDIANNQSICCV</sequence>
<feature type="chain" id="PRO_0000377661" description="GTP-binding protein YPT11">
    <location>
        <begin position="1"/>
        <end position="417"/>
    </location>
</feature>
<feature type="region of interest" description="Disordered" evidence="3">
    <location>
        <begin position="1"/>
        <end position="34"/>
    </location>
</feature>
<feature type="binding site" evidence="2">
    <location>
        <begin position="97"/>
        <end position="104"/>
    </location>
    <ligand>
        <name>GTP</name>
        <dbReference type="ChEBI" id="CHEBI:37565"/>
    </ligand>
</feature>
<feature type="binding site" evidence="2">
    <location>
        <begin position="228"/>
        <end position="232"/>
    </location>
    <ligand>
        <name>GTP</name>
        <dbReference type="ChEBI" id="CHEBI:37565"/>
    </ligand>
</feature>
<feature type="binding site" evidence="2">
    <location>
        <begin position="292"/>
        <end position="295"/>
    </location>
    <ligand>
        <name>GTP</name>
        <dbReference type="ChEBI" id="CHEBI:37565"/>
    </ligand>
</feature>
<feature type="lipid moiety-binding region" description="S-geranylgeranyl cysteine" evidence="1">
    <location>
        <position position="415"/>
    </location>
</feature>
<feature type="lipid moiety-binding region" description="S-geranylgeranyl cysteine" evidence="1">
    <location>
        <position position="416"/>
    </location>
</feature>
<protein>
    <recommendedName>
        <fullName>GTP-binding protein YPT11</fullName>
    </recommendedName>
    <alternativeName>
        <fullName>Rab GTPase YPT11</fullName>
    </alternativeName>
</protein>
<evidence type="ECO:0000250" key="1"/>
<evidence type="ECO:0000255" key="2"/>
<evidence type="ECO:0000256" key="3">
    <source>
        <dbReference type="SAM" id="MobiDB-lite"/>
    </source>
</evidence>
<evidence type="ECO:0000305" key="4"/>
<name>YPT11_YEAS7</name>